<gene>
    <name evidence="1" type="primary">queC</name>
    <name type="ordered locus">HP_0639</name>
</gene>
<keyword id="KW-0067">ATP-binding</keyword>
<keyword id="KW-0436">Ligase</keyword>
<keyword id="KW-0479">Metal-binding</keyword>
<keyword id="KW-0547">Nucleotide-binding</keyword>
<keyword id="KW-0671">Queuosine biosynthesis</keyword>
<keyword id="KW-1185">Reference proteome</keyword>
<keyword id="KW-0862">Zinc</keyword>
<accession>O25356</accession>
<proteinExistence type="inferred from homology"/>
<reference key="1">
    <citation type="journal article" date="1997" name="Nature">
        <title>The complete genome sequence of the gastric pathogen Helicobacter pylori.</title>
        <authorList>
            <person name="Tomb J.-F."/>
            <person name="White O."/>
            <person name="Kerlavage A.R."/>
            <person name="Clayton R.A."/>
            <person name="Sutton G.G."/>
            <person name="Fleischmann R.D."/>
            <person name="Ketchum K.A."/>
            <person name="Klenk H.-P."/>
            <person name="Gill S.R."/>
            <person name="Dougherty B.A."/>
            <person name="Nelson K.E."/>
            <person name="Quackenbush J."/>
            <person name="Zhou L."/>
            <person name="Kirkness E.F."/>
            <person name="Peterson S.N."/>
            <person name="Loftus B.J."/>
            <person name="Richardson D.L."/>
            <person name="Dodson R.J."/>
            <person name="Khalak H.G."/>
            <person name="Glodek A."/>
            <person name="McKenney K."/>
            <person name="FitzGerald L.M."/>
            <person name="Lee N."/>
            <person name="Adams M.D."/>
            <person name="Hickey E.K."/>
            <person name="Berg D.E."/>
            <person name="Gocayne J.D."/>
            <person name="Utterback T.R."/>
            <person name="Peterson J.D."/>
            <person name="Kelley J.M."/>
            <person name="Cotton M.D."/>
            <person name="Weidman J.F."/>
            <person name="Fujii C."/>
            <person name="Bowman C."/>
            <person name="Watthey L."/>
            <person name="Wallin E."/>
            <person name="Hayes W.S."/>
            <person name="Borodovsky M."/>
            <person name="Karp P.D."/>
            <person name="Smith H.O."/>
            <person name="Fraser C.M."/>
            <person name="Venter J.C."/>
        </authorList>
    </citation>
    <scope>NUCLEOTIDE SEQUENCE [LARGE SCALE GENOMIC DNA]</scope>
    <source>
        <strain>ATCC 700392 / 26695</strain>
    </source>
</reference>
<protein>
    <recommendedName>
        <fullName evidence="1">7-cyano-7-deazaguanine synthase</fullName>
        <ecNumber evidence="1">6.3.4.20</ecNumber>
    </recommendedName>
    <alternativeName>
        <fullName evidence="1">7-cyano-7-carbaguanine synthase</fullName>
    </alternativeName>
    <alternativeName>
        <fullName evidence="1">PreQ(0) synthase</fullName>
    </alternativeName>
    <alternativeName>
        <fullName evidence="1">Queuosine biosynthesis protein QueC</fullName>
    </alternativeName>
</protein>
<name>QUEC_HELPY</name>
<dbReference type="EC" id="6.3.4.20" evidence="1"/>
<dbReference type="EMBL" id="AE000511">
    <property type="protein sequence ID" value="AAD07701.1"/>
    <property type="molecule type" value="Genomic_DNA"/>
</dbReference>
<dbReference type="PIR" id="G64599">
    <property type="entry name" value="G64599"/>
</dbReference>
<dbReference type="RefSeq" id="NP_207433.1">
    <property type="nucleotide sequence ID" value="NC_000915.1"/>
</dbReference>
<dbReference type="RefSeq" id="WP_000435648.1">
    <property type="nucleotide sequence ID" value="NC_018939.1"/>
</dbReference>
<dbReference type="SMR" id="O25356"/>
<dbReference type="DIP" id="DIP-3566N"/>
<dbReference type="FunCoup" id="O25356">
    <property type="interactions" value="124"/>
</dbReference>
<dbReference type="IntAct" id="O25356">
    <property type="interactions" value="2"/>
</dbReference>
<dbReference type="MINT" id="O25356"/>
<dbReference type="STRING" id="85962.HP_0639"/>
<dbReference type="PaxDb" id="85962-C694_03305"/>
<dbReference type="DNASU" id="898760"/>
<dbReference type="EnsemblBacteria" id="AAD07701">
    <property type="protein sequence ID" value="AAD07701"/>
    <property type="gene ID" value="HP_0639"/>
</dbReference>
<dbReference type="KEGG" id="heo:C694_03305"/>
<dbReference type="KEGG" id="hpy:HP_0639"/>
<dbReference type="PATRIC" id="fig|85962.47.peg.689"/>
<dbReference type="eggNOG" id="COG0603">
    <property type="taxonomic scope" value="Bacteria"/>
</dbReference>
<dbReference type="InParanoid" id="O25356"/>
<dbReference type="OrthoDB" id="9789567at2"/>
<dbReference type="PhylomeDB" id="O25356"/>
<dbReference type="UniPathway" id="UPA00391"/>
<dbReference type="Proteomes" id="UP000000429">
    <property type="component" value="Chromosome"/>
</dbReference>
<dbReference type="GO" id="GO:0005524">
    <property type="term" value="F:ATP binding"/>
    <property type="evidence" value="ECO:0007669"/>
    <property type="project" value="UniProtKB-UniRule"/>
</dbReference>
<dbReference type="GO" id="GO:0016879">
    <property type="term" value="F:ligase activity, forming carbon-nitrogen bonds"/>
    <property type="evidence" value="ECO:0007669"/>
    <property type="project" value="UniProtKB-UniRule"/>
</dbReference>
<dbReference type="GO" id="GO:0008270">
    <property type="term" value="F:zinc ion binding"/>
    <property type="evidence" value="ECO:0007669"/>
    <property type="project" value="UniProtKB-UniRule"/>
</dbReference>
<dbReference type="GO" id="GO:0008616">
    <property type="term" value="P:queuosine biosynthetic process"/>
    <property type="evidence" value="ECO:0007669"/>
    <property type="project" value="UniProtKB-UniRule"/>
</dbReference>
<dbReference type="CDD" id="cd01995">
    <property type="entry name" value="QueC-like"/>
    <property type="match status" value="1"/>
</dbReference>
<dbReference type="FunFam" id="3.40.50.620:FF:000179">
    <property type="entry name" value="7-cyano-7-deazaguanine synthase"/>
    <property type="match status" value="1"/>
</dbReference>
<dbReference type="Gene3D" id="3.40.50.620">
    <property type="entry name" value="HUPs"/>
    <property type="match status" value="1"/>
</dbReference>
<dbReference type="HAMAP" id="MF_01633">
    <property type="entry name" value="QueC"/>
    <property type="match status" value="1"/>
</dbReference>
<dbReference type="InterPro" id="IPR018317">
    <property type="entry name" value="QueC"/>
</dbReference>
<dbReference type="InterPro" id="IPR014729">
    <property type="entry name" value="Rossmann-like_a/b/a_fold"/>
</dbReference>
<dbReference type="NCBIfam" id="TIGR00364">
    <property type="entry name" value="7-cyano-7-deazaguanine synthase QueC"/>
    <property type="match status" value="1"/>
</dbReference>
<dbReference type="PANTHER" id="PTHR42914">
    <property type="entry name" value="7-CYANO-7-DEAZAGUANINE SYNTHASE"/>
    <property type="match status" value="1"/>
</dbReference>
<dbReference type="PANTHER" id="PTHR42914:SF1">
    <property type="entry name" value="7-CYANO-7-DEAZAGUANINE SYNTHASE"/>
    <property type="match status" value="1"/>
</dbReference>
<dbReference type="Pfam" id="PF06508">
    <property type="entry name" value="QueC"/>
    <property type="match status" value="1"/>
</dbReference>
<dbReference type="PIRSF" id="PIRSF006293">
    <property type="entry name" value="ExsB"/>
    <property type="match status" value="1"/>
</dbReference>
<dbReference type="SUPFAM" id="SSF52402">
    <property type="entry name" value="Adenine nucleotide alpha hydrolases-like"/>
    <property type="match status" value="1"/>
</dbReference>
<comment type="function">
    <text evidence="1">Catalyzes the ATP-dependent conversion of 7-carboxy-7-deazaguanine (CDG) to 7-cyano-7-deazaguanine (preQ(0)).</text>
</comment>
<comment type="catalytic activity">
    <reaction evidence="1">
        <text>7-carboxy-7-deazaguanine + NH4(+) + ATP = 7-cyano-7-deazaguanine + ADP + phosphate + H2O + H(+)</text>
        <dbReference type="Rhea" id="RHEA:27982"/>
        <dbReference type="ChEBI" id="CHEBI:15377"/>
        <dbReference type="ChEBI" id="CHEBI:15378"/>
        <dbReference type="ChEBI" id="CHEBI:28938"/>
        <dbReference type="ChEBI" id="CHEBI:30616"/>
        <dbReference type="ChEBI" id="CHEBI:43474"/>
        <dbReference type="ChEBI" id="CHEBI:45075"/>
        <dbReference type="ChEBI" id="CHEBI:61036"/>
        <dbReference type="ChEBI" id="CHEBI:456216"/>
        <dbReference type="EC" id="6.3.4.20"/>
    </reaction>
</comment>
<comment type="cofactor">
    <cofactor evidence="1">
        <name>Zn(2+)</name>
        <dbReference type="ChEBI" id="CHEBI:29105"/>
    </cofactor>
    <text evidence="1">Binds 1 zinc ion per subunit.</text>
</comment>
<comment type="pathway">
    <text evidence="1">Purine metabolism; 7-cyano-7-deazaguanine biosynthesis.</text>
</comment>
<comment type="similarity">
    <text evidence="1">Belongs to the QueC family.</text>
</comment>
<sequence>MEQKICVIGFSGGQDSTTLAVWAKKRFKKVCLVGFDYAQKHSVELECAQKIASLLQLPYEIIPLDFLENITRSALFKNSNDLIGHSHAQNKDLPNSFVPNRNAIFITLLHSYAQKLGASNIALGVSQADFSGYPDCKEDFIKSIEHALNLGSNTAIKILTPLMFLNKAQEFQMAKDLGVLDLVIKETHTCYQGERKILHAYGYGCDKCPACQLRKKGFEEFQANKK</sequence>
<feature type="chain" id="PRO_0000246852" description="7-cyano-7-deazaguanine synthase">
    <location>
        <begin position="1"/>
        <end position="226"/>
    </location>
</feature>
<feature type="binding site" evidence="1">
    <location>
        <begin position="10"/>
        <end position="20"/>
    </location>
    <ligand>
        <name>ATP</name>
        <dbReference type="ChEBI" id="CHEBI:30616"/>
    </ligand>
</feature>
<feature type="binding site" evidence="1">
    <location>
        <position position="190"/>
    </location>
    <ligand>
        <name>Zn(2+)</name>
        <dbReference type="ChEBI" id="CHEBI:29105"/>
    </ligand>
</feature>
<feature type="binding site" evidence="1">
    <location>
        <position position="205"/>
    </location>
    <ligand>
        <name>Zn(2+)</name>
        <dbReference type="ChEBI" id="CHEBI:29105"/>
    </ligand>
</feature>
<feature type="binding site" evidence="1">
    <location>
        <position position="208"/>
    </location>
    <ligand>
        <name>Zn(2+)</name>
        <dbReference type="ChEBI" id="CHEBI:29105"/>
    </ligand>
</feature>
<feature type="binding site" evidence="1">
    <location>
        <position position="211"/>
    </location>
    <ligand>
        <name>Zn(2+)</name>
        <dbReference type="ChEBI" id="CHEBI:29105"/>
    </ligand>
</feature>
<evidence type="ECO:0000255" key="1">
    <source>
        <dbReference type="HAMAP-Rule" id="MF_01633"/>
    </source>
</evidence>
<organism>
    <name type="scientific">Helicobacter pylori (strain ATCC 700392 / 26695)</name>
    <name type="common">Campylobacter pylori</name>
    <dbReference type="NCBI Taxonomy" id="85962"/>
    <lineage>
        <taxon>Bacteria</taxon>
        <taxon>Pseudomonadati</taxon>
        <taxon>Campylobacterota</taxon>
        <taxon>Epsilonproteobacteria</taxon>
        <taxon>Campylobacterales</taxon>
        <taxon>Helicobacteraceae</taxon>
        <taxon>Helicobacter</taxon>
    </lineage>
</organism>